<reference key="1">
    <citation type="journal article" date="2009" name="Nat. Genet.">
        <title>Comparative genomic and phylogeographic analysis of Mycobacterium leprae.</title>
        <authorList>
            <person name="Monot M."/>
            <person name="Honore N."/>
            <person name="Garnier T."/>
            <person name="Zidane N."/>
            <person name="Sherafi D."/>
            <person name="Paniz-Mondolfi A."/>
            <person name="Matsuoka M."/>
            <person name="Taylor G.M."/>
            <person name="Donoghue H.D."/>
            <person name="Bouwman A."/>
            <person name="Mays S."/>
            <person name="Watson C."/>
            <person name="Lockwood D."/>
            <person name="Khamispour A."/>
            <person name="Dowlati Y."/>
            <person name="Jianping S."/>
            <person name="Rea T.H."/>
            <person name="Vera-Cabrera L."/>
            <person name="Stefani M.M."/>
            <person name="Banu S."/>
            <person name="Macdonald M."/>
            <person name="Sapkota B.R."/>
            <person name="Spencer J.S."/>
            <person name="Thomas J."/>
            <person name="Harshman K."/>
            <person name="Singh P."/>
            <person name="Busso P."/>
            <person name="Gattiker A."/>
            <person name="Rougemont J."/>
            <person name="Brennan P.J."/>
            <person name="Cole S.T."/>
        </authorList>
    </citation>
    <scope>NUCLEOTIDE SEQUENCE [LARGE SCALE GENOMIC DNA]</scope>
    <source>
        <strain>Br4923</strain>
    </source>
</reference>
<comment type="catalytic activity">
    <reaction evidence="1">
        <text>(2R)-3-phosphoglycerate + ATP = (2R)-3-phospho-glyceroyl phosphate + ADP</text>
        <dbReference type="Rhea" id="RHEA:14801"/>
        <dbReference type="ChEBI" id="CHEBI:30616"/>
        <dbReference type="ChEBI" id="CHEBI:57604"/>
        <dbReference type="ChEBI" id="CHEBI:58272"/>
        <dbReference type="ChEBI" id="CHEBI:456216"/>
        <dbReference type="EC" id="2.7.2.3"/>
    </reaction>
</comment>
<comment type="pathway">
    <text evidence="1">Carbohydrate degradation; glycolysis; pyruvate from D-glyceraldehyde 3-phosphate: step 2/5.</text>
</comment>
<comment type="subunit">
    <text evidence="1">Monomer.</text>
</comment>
<comment type="subcellular location">
    <subcellularLocation>
        <location evidence="1">Cytoplasm</location>
    </subcellularLocation>
</comment>
<comment type="similarity">
    <text evidence="1">Belongs to the phosphoglycerate kinase family.</text>
</comment>
<organism>
    <name type="scientific">Mycobacterium leprae (strain Br4923)</name>
    <dbReference type="NCBI Taxonomy" id="561304"/>
    <lineage>
        <taxon>Bacteria</taxon>
        <taxon>Bacillati</taxon>
        <taxon>Actinomycetota</taxon>
        <taxon>Actinomycetes</taxon>
        <taxon>Mycobacteriales</taxon>
        <taxon>Mycobacteriaceae</taxon>
        <taxon>Mycobacterium</taxon>
    </lineage>
</organism>
<keyword id="KW-0067">ATP-binding</keyword>
<keyword id="KW-0963">Cytoplasm</keyword>
<keyword id="KW-0324">Glycolysis</keyword>
<keyword id="KW-0418">Kinase</keyword>
<keyword id="KW-0547">Nucleotide-binding</keyword>
<keyword id="KW-0808">Transferase</keyword>
<dbReference type="EC" id="2.7.2.3" evidence="1"/>
<dbReference type="EMBL" id="FM211192">
    <property type="protein sequence ID" value="CAR70664.1"/>
    <property type="molecule type" value="Genomic_DNA"/>
</dbReference>
<dbReference type="SMR" id="B8ZUP2"/>
<dbReference type="KEGG" id="mlb:MLBr00571"/>
<dbReference type="HOGENOM" id="CLU_025427_0_2_11"/>
<dbReference type="UniPathway" id="UPA00109">
    <property type="reaction ID" value="UER00185"/>
</dbReference>
<dbReference type="Proteomes" id="UP000006900">
    <property type="component" value="Chromosome"/>
</dbReference>
<dbReference type="GO" id="GO:0005829">
    <property type="term" value="C:cytosol"/>
    <property type="evidence" value="ECO:0007669"/>
    <property type="project" value="TreeGrafter"/>
</dbReference>
<dbReference type="GO" id="GO:0043531">
    <property type="term" value="F:ADP binding"/>
    <property type="evidence" value="ECO:0007669"/>
    <property type="project" value="TreeGrafter"/>
</dbReference>
<dbReference type="GO" id="GO:0005524">
    <property type="term" value="F:ATP binding"/>
    <property type="evidence" value="ECO:0007669"/>
    <property type="project" value="UniProtKB-KW"/>
</dbReference>
<dbReference type="GO" id="GO:0004618">
    <property type="term" value="F:phosphoglycerate kinase activity"/>
    <property type="evidence" value="ECO:0007669"/>
    <property type="project" value="UniProtKB-UniRule"/>
</dbReference>
<dbReference type="GO" id="GO:0006094">
    <property type="term" value="P:gluconeogenesis"/>
    <property type="evidence" value="ECO:0007669"/>
    <property type="project" value="TreeGrafter"/>
</dbReference>
<dbReference type="GO" id="GO:0006096">
    <property type="term" value="P:glycolytic process"/>
    <property type="evidence" value="ECO:0007669"/>
    <property type="project" value="UniProtKB-UniRule"/>
</dbReference>
<dbReference type="CDD" id="cd00318">
    <property type="entry name" value="Phosphoglycerate_kinase"/>
    <property type="match status" value="1"/>
</dbReference>
<dbReference type="FunFam" id="3.40.50.1260:FF:000006">
    <property type="entry name" value="Phosphoglycerate kinase"/>
    <property type="match status" value="1"/>
</dbReference>
<dbReference type="FunFam" id="3.40.50.1260:FF:000031">
    <property type="entry name" value="Phosphoglycerate kinase 1"/>
    <property type="match status" value="1"/>
</dbReference>
<dbReference type="Gene3D" id="3.40.50.1260">
    <property type="entry name" value="Phosphoglycerate kinase, N-terminal domain"/>
    <property type="match status" value="2"/>
</dbReference>
<dbReference type="HAMAP" id="MF_00145">
    <property type="entry name" value="Phosphoglyc_kinase"/>
    <property type="match status" value="1"/>
</dbReference>
<dbReference type="InterPro" id="IPR001576">
    <property type="entry name" value="Phosphoglycerate_kinase"/>
</dbReference>
<dbReference type="InterPro" id="IPR015911">
    <property type="entry name" value="Phosphoglycerate_kinase_CS"/>
</dbReference>
<dbReference type="InterPro" id="IPR015824">
    <property type="entry name" value="Phosphoglycerate_kinase_N"/>
</dbReference>
<dbReference type="InterPro" id="IPR036043">
    <property type="entry name" value="Phosphoglycerate_kinase_sf"/>
</dbReference>
<dbReference type="PANTHER" id="PTHR11406">
    <property type="entry name" value="PHOSPHOGLYCERATE KINASE"/>
    <property type="match status" value="1"/>
</dbReference>
<dbReference type="PANTHER" id="PTHR11406:SF23">
    <property type="entry name" value="PHOSPHOGLYCERATE KINASE 1, CHLOROPLASTIC-RELATED"/>
    <property type="match status" value="1"/>
</dbReference>
<dbReference type="Pfam" id="PF00162">
    <property type="entry name" value="PGK"/>
    <property type="match status" value="1"/>
</dbReference>
<dbReference type="PIRSF" id="PIRSF000724">
    <property type="entry name" value="Pgk"/>
    <property type="match status" value="1"/>
</dbReference>
<dbReference type="PRINTS" id="PR00477">
    <property type="entry name" value="PHGLYCKINASE"/>
</dbReference>
<dbReference type="SUPFAM" id="SSF53748">
    <property type="entry name" value="Phosphoglycerate kinase"/>
    <property type="match status" value="1"/>
</dbReference>
<dbReference type="PROSITE" id="PS00111">
    <property type="entry name" value="PGLYCERATE_KINASE"/>
    <property type="match status" value="1"/>
</dbReference>
<gene>
    <name evidence="1" type="primary">pgk</name>
    <name type="ordered locus">MLBr00571</name>
</gene>
<proteinExistence type="inferred from homology"/>
<sequence length="416" mass="43279">MRIPNLKDLLEEGVSGRCVLVRCDLNVPLGDDGAITDLGRVTASVPTLKALLEAGAKIVVAAHLGRPKNGPDPKLSLEPVAAALGEQLGQNVQLVCSTDRSPVGGDALACVERLTDGDLLLLQNIRFDPRETSKVDDERLALAKQLVELVGSAGAFVSDGFGVVHRRQASVYDVATLLPHYAGILVADEIRILEQLTSSAKRPYAVVLGGSKVSDKLGVIESLATKADSIVLGGGMCFTFLAAQGFSVGKSLLETEMIETCRSLLDTYADVLRLPMDIVVTEKFVADSPPQTVAADAIPDGLMGLDIGPESVKRFATLLSNASTIFWNGPMGVFEFPAYAAGTRGVAEAIVAVTGKGAFSVVGGGDSAAAMRALSLPEGSVSHLSTGGGASLEYLEGKTLPGIEVLGREQPRGGDS</sequence>
<name>PGK_MYCLB</name>
<accession>B8ZUP2</accession>
<protein>
    <recommendedName>
        <fullName evidence="1">Phosphoglycerate kinase</fullName>
        <ecNumber evidence="1">2.7.2.3</ecNumber>
    </recommendedName>
</protein>
<feature type="chain" id="PRO_1000192839" description="Phosphoglycerate kinase">
    <location>
        <begin position="1"/>
        <end position="416"/>
    </location>
</feature>
<feature type="binding site" evidence="1">
    <location>
        <begin position="24"/>
        <end position="26"/>
    </location>
    <ligand>
        <name>substrate</name>
    </ligand>
</feature>
<feature type="binding site" evidence="1">
    <location>
        <position position="40"/>
    </location>
    <ligand>
        <name>substrate</name>
    </ligand>
</feature>
<feature type="binding site" evidence="1">
    <location>
        <begin position="63"/>
        <end position="66"/>
    </location>
    <ligand>
        <name>substrate</name>
    </ligand>
</feature>
<feature type="binding site" evidence="1">
    <location>
        <position position="126"/>
    </location>
    <ligand>
        <name>substrate</name>
    </ligand>
</feature>
<feature type="binding site" evidence="1">
    <location>
        <position position="166"/>
    </location>
    <ligand>
        <name>substrate</name>
    </ligand>
</feature>
<feature type="binding site" evidence="1">
    <location>
        <position position="216"/>
    </location>
    <ligand>
        <name>ATP</name>
        <dbReference type="ChEBI" id="CHEBI:30616"/>
    </ligand>
</feature>
<feature type="binding site" evidence="1">
    <location>
        <position position="304"/>
    </location>
    <ligand>
        <name>ATP</name>
        <dbReference type="ChEBI" id="CHEBI:30616"/>
    </ligand>
</feature>
<feature type="binding site" evidence="1">
    <location>
        <position position="335"/>
    </location>
    <ligand>
        <name>ATP</name>
        <dbReference type="ChEBI" id="CHEBI:30616"/>
    </ligand>
</feature>
<feature type="binding site" evidence="1">
    <location>
        <begin position="364"/>
        <end position="367"/>
    </location>
    <ligand>
        <name>ATP</name>
        <dbReference type="ChEBI" id="CHEBI:30616"/>
    </ligand>
</feature>
<evidence type="ECO:0000255" key="1">
    <source>
        <dbReference type="HAMAP-Rule" id="MF_00145"/>
    </source>
</evidence>